<protein>
    <recommendedName>
        <fullName>Uncharacterized protein Lin1247/Lin1750</fullName>
    </recommendedName>
</protein>
<name>Y1247_LISIN</name>
<proteinExistence type="predicted"/>
<feature type="chain" id="PRO_0000210810" description="Uncharacterized protein Lin1247/Lin1750">
    <location>
        <begin position="1"/>
        <end position="79"/>
    </location>
</feature>
<reference key="1">
    <citation type="journal article" date="2001" name="Science">
        <title>Comparative genomics of Listeria species.</title>
        <authorList>
            <person name="Glaser P."/>
            <person name="Frangeul L."/>
            <person name="Buchrieser C."/>
            <person name="Rusniok C."/>
            <person name="Amend A."/>
            <person name="Baquero F."/>
            <person name="Berche P."/>
            <person name="Bloecker H."/>
            <person name="Brandt P."/>
            <person name="Chakraborty T."/>
            <person name="Charbit A."/>
            <person name="Chetouani F."/>
            <person name="Couve E."/>
            <person name="de Daruvar A."/>
            <person name="Dehoux P."/>
            <person name="Domann E."/>
            <person name="Dominguez-Bernal G."/>
            <person name="Duchaud E."/>
            <person name="Durant L."/>
            <person name="Dussurget O."/>
            <person name="Entian K.-D."/>
            <person name="Fsihi H."/>
            <person name="Garcia-del Portillo F."/>
            <person name="Garrido P."/>
            <person name="Gautier L."/>
            <person name="Goebel W."/>
            <person name="Gomez-Lopez N."/>
            <person name="Hain T."/>
            <person name="Hauf J."/>
            <person name="Jackson D."/>
            <person name="Jones L.-M."/>
            <person name="Kaerst U."/>
            <person name="Kreft J."/>
            <person name="Kuhn M."/>
            <person name="Kunst F."/>
            <person name="Kurapkat G."/>
            <person name="Madueno E."/>
            <person name="Maitournam A."/>
            <person name="Mata Vicente J."/>
            <person name="Ng E."/>
            <person name="Nedjari H."/>
            <person name="Nordsiek G."/>
            <person name="Novella S."/>
            <person name="de Pablos B."/>
            <person name="Perez-Diaz J.-C."/>
            <person name="Purcell R."/>
            <person name="Remmel B."/>
            <person name="Rose M."/>
            <person name="Schlueter T."/>
            <person name="Simoes N."/>
            <person name="Tierrez A."/>
            <person name="Vazquez-Boland J.-A."/>
            <person name="Voss H."/>
            <person name="Wehland J."/>
            <person name="Cossart P."/>
        </authorList>
    </citation>
    <scope>NUCLEOTIDE SEQUENCE [LARGE SCALE GENOMIC DNA]</scope>
    <source>
        <strain>ATCC BAA-680 / CLIP 11262</strain>
    </source>
</reference>
<sequence>MNRQREELIILKRIEYVEIIKKIPGTPFRLGGIYEIERVGSANARVRINNSIYQVPKEALKVVEQVERERWEENDKIHD</sequence>
<gene>
    <name type="ordered locus">lin1247</name>
</gene>
<gene>
    <name type="ordered locus">lin1750</name>
</gene>
<dbReference type="EMBL" id="AL596168">
    <property type="protein sequence ID" value="CAC96478.1"/>
    <property type="molecule type" value="Genomic_DNA"/>
</dbReference>
<dbReference type="EMBL" id="AL596169">
    <property type="protein sequence ID" value="CAC96981.1"/>
    <property type="molecule type" value="Genomic_DNA"/>
</dbReference>
<dbReference type="PIR" id="AE1651">
    <property type="entry name" value="AE1651"/>
</dbReference>
<dbReference type="PIR" id="AF1588">
    <property type="entry name" value="AF1588"/>
</dbReference>
<dbReference type="STRING" id="272626.gene:17565578"/>
<dbReference type="KEGG" id="lin:lin1247"/>
<dbReference type="KEGG" id="lin:lin1750"/>
<dbReference type="HOGENOM" id="CLU_2601798_0_0_9"/>
<dbReference type="Proteomes" id="UP000002513">
    <property type="component" value="Chromosome"/>
</dbReference>
<organism>
    <name type="scientific">Listeria innocua serovar 6a (strain ATCC BAA-680 / CLIP 11262)</name>
    <dbReference type="NCBI Taxonomy" id="272626"/>
    <lineage>
        <taxon>Bacteria</taxon>
        <taxon>Bacillati</taxon>
        <taxon>Bacillota</taxon>
        <taxon>Bacilli</taxon>
        <taxon>Bacillales</taxon>
        <taxon>Listeriaceae</taxon>
        <taxon>Listeria</taxon>
    </lineage>
</organism>
<accession>Q925W5</accession>